<sequence length="156" mass="17611">MKKVTHIVEELVTPIVTHMGLELVDIEYVKEGKNWFLRVFIDSPTGIDIDQCGVVSEQLSEKLDEIDPIPHNYFLEVSSPGAERPLKKARDFERAVGKNVYVKTYEPIDGQKEFEGLLTAFDGQTVTVEVKVKTKKKTITIPYEKVASARLAVIFS</sequence>
<name>RIMP_ANOFW</name>
<feature type="chain" id="PRO_0000384603" description="Ribosome maturation factor RimP">
    <location>
        <begin position="1"/>
        <end position="156"/>
    </location>
</feature>
<keyword id="KW-0963">Cytoplasm</keyword>
<keyword id="KW-0690">Ribosome biogenesis</keyword>
<dbReference type="EMBL" id="CP000922">
    <property type="protein sequence ID" value="ACJ34060.1"/>
    <property type="status" value="ALT_INIT"/>
    <property type="molecule type" value="Genomic_DNA"/>
</dbReference>
<dbReference type="RefSeq" id="WP_041638531.1">
    <property type="nucleotide sequence ID" value="NC_011567.1"/>
</dbReference>
<dbReference type="SMR" id="B7GG79"/>
<dbReference type="STRING" id="491915.Aflv_1699"/>
<dbReference type="GeneID" id="23314966"/>
<dbReference type="KEGG" id="afl:Aflv_1699"/>
<dbReference type="eggNOG" id="COG0779">
    <property type="taxonomic scope" value="Bacteria"/>
</dbReference>
<dbReference type="HOGENOM" id="CLU_070525_2_0_9"/>
<dbReference type="Proteomes" id="UP000000742">
    <property type="component" value="Chromosome"/>
</dbReference>
<dbReference type="GO" id="GO:0005829">
    <property type="term" value="C:cytosol"/>
    <property type="evidence" value="ECO:0007669"/>
    <property type="project" value="TreeGrafter"/>
</dbReference>
<dbReference type="GO" id="GO:0000028">
    <property type="term" value="P:ribosomal small subunit assembly"/>
    <property type="evidence" value="ECO:0007669"/>
    <property type="project" value="TreeGrafter"/>
</dbReference>
<dbReference type="GO" id="GO:0006412">
    <property type="term" value="P:translation"/>
    <property type="evidence" value="ECO:0007669"/>
    <property type="project" value="TreeGrafter"/>
</dbReference>
<dbReference type="CDD" id="cd01734">
    <property type="entry name" value="YlxS_C"/>
    <property type="match status" value="1"/>
</dbReference>
<dbReference type="FunFam" id="3.30.300.70:FF:000001">
    <property type="entry name" value="Ribosome maturation factor RimP"/>
    <property type="match status" value="1"/>
</dbReference>
<dbReference type="Gene3D" id="2.30.30.180">
    <property type="entry name" value="Ribosome maturation factor RimP, C-terminal domain"/>
    <property type="match status" value="1"/>
</dbReference>
<dbReference type="Gene3D" id="3.30.300.70">
    <property type="entry name" value="RimP-like superfamily, N-terminal"/>
    <property type="match status" value="1"/>
</dbReference>
<dbReference type="HAMAP" id="MF_01077">
    <property type="entry name" value="RimP"/>
    <property type="match status" value="1"/>
</dbReference>
<dbReference type="InterPro" id="IPR003728">
    <property type="entry name" value="Ribosome_maturation_RimP"/>
</dbReference>
<dbReference type="InterPro" id="IPR028998">
    <property type="entry name" value="RimP_C"/>
</dbReference>
<dbReference type="InterPro" id="IPR036847">
    <property type="entry name" value="RimP_C_sf"/>
</dbReference>
<dbReference type="InterPro" id="IPR028989">
    <property type="entry name" value="RimP_N"/>
</dbReference>
<dbReference type="InterPro" id="IPR035956">
    <property type="entry name" value="RimP_N_sf"/>
</dbReference>
<dbReference type="NCBIfam" id="NF000928">
    <property type="entry name" value="PRK00092.1-2"/>
    <property type="match status" value="1"/>
</dbReference>
<dbReference type="PANTHER" id="PTHR33867">
    <property type="entry name" value="RIBOSOME MATURATION FACTOR RIMP"/>
    <property type="match status" value="1"/>
</dbReference>
<dbReference type="PANTHER" id="PTHR33867:SF1">
    <property type="entry name" value="RIBOSOME MATURATION FACTOR RIMP"/>
    <property type="match status" value="1"/>
</dbReference>
<dbReference type="Pfam" id="PF17384">
    <property type="entry name" value="DUF150_C"/>
    <property type="match status" value="1"/>
</dbReference>
<dbReference type="Pfam" id="PF02576">
    <property type="entry name" value="RimP_N"/>
    <property type="match status" value="1"/>
</dbReference>
<dbReference type="SUPFAM" id="SSF74942">
    <property type="entry name" value="YhbC-like, C-terminal domain"/>
    <property type="match status" value="1"/>
</dbReference>
<dbReference type="SUPFAM" id="SSF75420">
    <property type="entry name" value="YhbC-like, N-terminal domain"/>
    <property type="match status" value="1"/>
</dbReference>
<comment type="function">
    <text evidence="1">Required for maturation of 30S ribosomal subunits.</text>
</comment>
<comment type="subcellular location">
    <subcellularLocation>
        <location evidence="1">Cytoplasm</location>
    </subcellularLocation>
</comment>
<comment type="similarity">
    <text evidence="1">Belongs to the RimP family.</text>
</comment>
<comment type="sequence caution" evidence="2">
    <conflict type="erroneous initiation">
        <sequence resource="EMBL-CDS" id="ACJ34060"/>
    </conflict>
</comment>
<organism>
    <name type="scientific">Anoxybacillus flavithermus (strain DSM 21510 / WK1)</name>
    <dbReference type="NCBI Taxonomy" id="491915"/>
    <lineage>
        <taxon>Bacteria</taxon>
        <taxon>Bacillati</taxon>
        <taxon>Bacillota</taxon>
        <taxon>Bacilli</taxon>
        <taxon>Bacillales</taxon>
        <taxon>Anoxybacillaceae</taxon>
        <taxon>Anoxybacillus</taxon>
    </lineage>
</organism>
<reference key="1">
    <citation type="journal article" date="2008" name="Genome Biol.">
        <title>Encapsulated in silica: genome, proteome and physiology of the thermophilic bacterium Anoxybacillus flavithermus WK1.</title>
        <authorList>
            <person name="Saw J.H."/>
            <person name="Mountain B.W."/>
            <person name="Feng L."/>
            <person name="Omelchenko M.V."/>
            <person name="Hou S."/>
            <person name="Saito J.A."/>
            <person name="Stott M.B."/>
            <person name="Li D."/>
            <person name="Zhao G."/>
            <person name="Wu J."/>
            <person name="Galperin M.Y."/>
            <person name="Koonin E.V."/>
            <person name="Makarova K.S."/>
            <person name="Wolf Y.I."/>
            <person name="Rigden D.J."/>
            <person name="Dunfield P.F."/>
            <person name="Wang L."/>
            <person name="Alam M."/>
        </authorList>
    </citation>
    <scope>NUCLEOTIDE SEQUENCE [LARGE SCALE GENOMIC DNA]</scope>
    <source>
        <strain>DSM 21510 / WK1</strain>
    </source>
</reference>
<protein>
    <recommendedName>
        <fullName evidence="1">Ribosome maturation factor RimP</fullName>
    </recommendedName>
</protein>
<proteinExistence type="inferred from homology"/>
<evidence type="ECO:0000255" key="1">
    <source>
        <dbReference type="HAMAP-Rule" id="MF_01077"/>
    </source>
</evidence>
<evidence type="ECO:0000305" key="2"/>
<accession>B7GG79</accession>
<gene>
    <name evidence="1" type="primary">rimP</name>
    <name type="ordered locus">Aflv_1699</name>
</gene>